<reference key="1">
    <citation type="journal article" date="2007" name="PLoS Genet.">
        <title>Patterns and implications of gene gain and loss in the evolution of Prochlorococcus.</title>
        <authorList>
            <person name="Kettler G.C."/>
            <person name="Martiny A.C."/>
            <person name="Huang K."/>
            <person name="Zucker J."/>
            <person name="Coleman M.L."/>
            <person name="Rodrigue S."/>
            <person name="Chen F."/>
            <person name="Lapidus A."/>
            <person name="Ferriera S."/>
            <person name="Johnson J."/>
            <person name="Steglich C."/>
            <person name="Church G.M."/>
            <person name="Richardson P."/>
            <person name="Chisholm S.W."/>
        </authorList>
    </citation>
    <scope>NUCLEOTIDE SEQUENCE [LARGE SCALE GENOMIC DNA]</scope>
    <source>
        <strain>MIT 9303</strain>
    </source>
</reference>
<gene>
    <name evidence="1" type="primary">atpF2</name>
    <name evidence="1" type="synonym">atpG</name>
    <name type="ordered locus">P9303_04801</name>
</gene>
<evidence type="ECO:0000255" key="1">
    <source>
        <dbReference type="HAMAP-Rule" id="MF_01399"/>
    </source>
</evidence>
<keyword id="KW-0066">ATP synthesis</keyword>
<keyword id="KW-0138">CF(0)</keyword>
<keyword id="KW-0375">Hydrogen ion transport</keyword>
<keyword id="KW-0406">Ion transport</keyword>
<keyword id="KW-0472">Membrane</keyword>
<keyword id="KW-0793">Thylakoid</keyword>
<keyword id="KW-0812">Transmembrane</keyword>
<keyword id="KW-1133">Transmembrane helix</keyword>
<keyword id="KW-0813">Transport</keyword>
<accession>A2C6X2</accession>
<sequence>MTSLLLFGAGGLFDFDATLPLMALQVVLLTFILNALFFRPVGRVVEEREVYVTTSRAEAKQKLAEAEKLELELKEQLKSARIAAQQLIQEAEKDSEQLYREALAIANADANAAREKARREIDAQRDSALTQLKGDAEKLGDLIVNRLLAAK</sequence>
<proteinExistence type="inferred from homology"/>
<dbReference type="EMBL" id="CP000554">
    <property type="protein sequence ID" value="ABM77232.1"/>
    <property type="molecule type" value="Genomic_DNA"/>
</dbReference>
<dbReference type="RefSeq" id="WP_011825156.1">
    <property type="nucleotide sequence ID" value="NC_008820.1"/>
</dbReference>
<dbReference type="SMR" id="A2C6X2"/>
<dbReference type="STRING" id="59922.P9303_04801"/>
<dbReference type="KEGG" id="pmf:P9303_04801"/>
<dbReference type="HOGENOM" id="CLU_079215_9_0_3"/>
<dbReference type="BioCyc" id="PMAR59922:G1G80-442-MONOMER"/>
<dbReference type="Proteomes" id="UP000002274">
    <property type="component" value="Chromosome"/>
</dbReference>
<dbReference type="GO" id="GO:0031676">
    <property type="term" value="C:plasma membrane-derived thylakoid membrane"/>
    <property type="evidence" value="ECO:0007669"/>
    <property type="project" value="UniProtKB-SubCell"/>
</dbReference>
<dbReference type="GO" id="GO:0045259">
    <property type="term" value="C:proton-transporting ATP synthase complex"/>
    <property type="evidence" value="ECO:0007669"/>
    <property type="project" value="UniProtKB-KW"/>
</dbReference>
<dbReference type="GO" id="GO:0046933">
    <property type="term" value="F:proton-transporting ATP synthase activity, rotational mechanism"/>
    <property type="evidence" value="ECO:0007669"/>
    <property type="project" value="UniProtKB-UniRule"/>
</dbReference>
<dbReference type="GO" id="GO:0046961">
    <property type="term" value="F:proton-transporting ATPase activity, rotational mechanism"/>
    <property type="evidence" value="ECO:0007669"/>
    <property type="project" value="TreeGrafter"/>
</dbReference>
<dbReference type="CDD" id="cd06503">
    <property type="entry name" value="ATP-synt_Fo_b"/>
    <property type="match status" value="1"/>
</dbReference>
<dbReference type="HAMAP" id="MF_01398">
    <property type="entry name" value="ATP_synth_b_bprime"/>
    <property type="match status" value="1"/>
</dbReference>
<dbReference type="HAMAP" id="MF_01399">
    <property type="entry name" value="ATP_synth_bprime"/>
    <property type="match status" value="1"/>
</dbReference>
<dbReference type="InterPro" id="IPR034679">
    <property type="entry name" value="ATP_synth_b"/>
</dbReference>
<dbReference type="InterPro" id="IPR028987">
    <property type="entry name" value="ATP_synth_B-like_membr_sf"/>
</dbReference>
<dbReference type="InterPro" id="IPR002146">
    <property type="entry name" value="ATP_synth_b/b'su_bac/chlpt"/>
</dbReference>
<dbReference type="InterPro" id="IPR050059">
    <property type="entry name" value="ATP_synthase_B_chain"/>
</dbReference>
<dbReference type="NCBIfam" id="NF005607">
    <property type="entry name" value="PRK07353.1"/>
    <property type="match status" value="1"/>
</dbReference>
<dbReference type="PANTHER" id="PTHR33445">
    <property type="entry name" value="ATP SYNTHASE SUBUNIT B', CHLOROPLASTIC"/>
    <property type="match status" value="1"/>
</dbReference>
<dbReference type="PANTHER" id="PTHR33445:SF2">
    <property type="entry name" value="ATP SYNTHASE SUBUNIT B', CHLOROPLASTIC"/>
    <property type="match status" value="1"/>
</dbReference>
<dbReference type="Pfam" id="PF00430">
    <property type="entry name" value="ATP-synt_B"/>
    <property type="match status" value="1"/>
</dbReference>
<dbReference type="SUPFAM" id="SSF81573">
    <property type="entry name" value="F1F0 ATP synthase subunit B, membrane domain"/>
    <property type="match status" value="1"/>
</dbReference>
<protein>
    <recommendedName>
        <fullName evidence="1">ATP synthase subunit b'</fullName>
    </recommendedName>
    <alternativeName>
        <fullName evidence="1">ATP synthase F(0) sector subunit b'</fullName>
    </alternativeName>
    <alternativeName>
        <fullName evidence="1">ATPase subunit II</fullName>
    </alternativeName>
    <alternativeName>
        <fullName evidence="1">F-type ATPase subunit b'</fullName>
        <shortName evidence="1">F-ATPase subunit b'</shortName>
    </alternativeName>
</protein>
<name>ATPF2_PROM3</name>
<comment type="function">
    <text evidence="1">F(1)F(0) ATP synthase produces ATP from ADP in the presence of a proton or sodium gradient. F-type ATPases consist of two structural domains, F(1) containing the extramembraneous catalytic core and F(0) containing the membrane proton channel, linked together by a central stalk and a peripheral stalk. During catalysis, ATP synthesis in the catalytic domain of F(1) is coupled via a rotary mechanism of the central stalk subunits to proton translocation.</text>
</comment>
<comment type="function">
    <text evidence="1">Component of the F(0) channel, it forms part of the peripheral stalk, linking F(1) to F(0). The b'-subunit is a diverged and duplicated form of b found in plants and photosynthetic bacteria.</text>
</comment>
<comment type="subunit">
    <text evidence="1">F-type ATPases have 2 components, F(1) - the catalytic core - and F(0) - the membrane proton channel. F(1) has five subunits: alpha(3), beta(3), gamma(1), delta(1), epsilon(1). F(0) has four main subunits: a(1), b(1), b'(1) and c(10-14). The alpha and beta chains form an alternating ring which encloses part of the gamma chain. F(1) is attached to F(0) by a central stalk formed by the gamma and epsilon chains, while a peripheral stalk is formed by the delta, b and b' chains.</text>
</comment>
<comment type="subcellular location">
    <subcellularLocation>
        <location evidence="1">Cellular thylakoid membrane</location>
        <topology evidence="1">Single-pass membrane protein</topology>
    </subcellularLocation>
</comment>
<comment type="similarity">
    <text evidence="1">Belongs to the ATPase B chain family.</text>
</comment>
<feature type="chain" id="PRO_0000369025" description="ATP synthase subunit b'">
    <location>
        <begin position="1"/>
        <end position="151"/>
    </location>
</feature>
<feature type="transmembrane region" description="Helical" evidence="1">
    <location>
        <begin position="18"/>
        <end position="38"/>
    </location>
</feature>
<organism>
    <name type="scientific">Prochlorococcus marinus (strain MIT 9303)</name>
    <dbReference type="NCBI Taxonomy" id="59922"/>
    <lineage>
        <taxon>Bacteria</taxon>
        <taxon>Bacillati</taxon>
        <taxon>Cyanobacteriota</taxon>
        <taxon>Cyanophyceae</taxon>
        <taxon>Synechococcales</taxon>
        <taxon>Prochlorococcaceae</taxon>
        <taxon>Prochlorococcus</taxon>
    </lineage>
</organism>